<reference key="1">
    <citation type="submission" date="1988-09" db="EMBL/GenBank/DDBJ databases">
        <authorList>
            <person name="Donahue P.R."/>
            <person name="Kornfeld H."/>
            <person name="Gallo M.V."/>
            <person name="Mullins J.I."/>
        </authorList>
    </citation>
    <scope>NUCLEOTIDE SEQUENCE [GENOMIC RNA]</scope>
</reference>
<reference key="2">
    <citation type="journal article" date="1988" name="Nature">
        <title>Comparison of simian immunodeficiency virus isolates.</title>
        <authorList>
            <person name="Kestler H.W."/>
            <person name="Li Y."/>
            <person name="Naidu Y.M."/>
            <person name="Butler C.V."/>
            <person name="Ochs M.F."/>
            <person name="Jaenel G."/>
            <person name="King N.W."/>
            <person name="Daniel M.D."/>
            <person name="Desrosiers R.C."/>
        </authorList>
    </citation>
    <scope>NUCLEOTIDE SEQUENCE [GENOMIC DNA] OF 394-772</scope>
</reference>
<reference key="3">
    <citation type="journal article" date="1996" name="J. Cell Biol.">
        <title>An internalization signal in the simian immunodeficiency virus transmembrane protein cytoplasmic domain modulates expression of envelope glycoproteins on the cell surface.</title>
        <authorList>
            <person name="Sauter M.M."/>
            <person name="Pelchen-Matthews A."/>
            <person name="Bron R."/>
            <person name="Marsh M."/>
            <person name="LaBranche C.C."/>
            <person name="Vance P.J."/>
            <person name="Romano J."/>
            <person name="Haggarty B.S."/>
            <person name="Hart T.K."/>
            <person name="Lee W.M."/>
            <person name="Hoxie J.A."/>
        </authorList>
    </citation>
    <scope>DOMAIN YXXV MOTIF</scope>
    <scope>MUTAGENESIS OF TYR-723</scope>
</reference>
<reference key="4">
    <citation type="journal article" date="2001" name="J. Virol.">
        <title>DC-SIGN interactions with human immunodeficiency virus type 1 and 2 and simian immunodeficiency virus.</title>
        <authorList>
            <person name="Pohlmann S."/>
            <person name="Baribaud F."/>
            <person name="Lee B."/>
            <person name="Leslie G.J."/>
            <person name="Sanchez M.D."/>
            <person name="Hiebenthal-Millow K."/>
            <person name="Munch J."/>
            <person name="Kirchhoff F."/>
            <person name="Doms R.W."/>
        </authorList>
    </citation>
    <scope>INTERACTION OF SURFACE PROTEIN GP120 WITH HOST CD209/DC-SIGN</scope>
    <source>
        <strain>Isolate SIV-mac239</strain>
    </source>
</reference>
<dbReference type="EMBL" id="M19499">
    <property type="status" value="NOT_ANNOTATED_CDS"/>
    <property type="molecule type" value="Genomic_RNA"/>
</dbReference>
<dbReference type="EMBL" id="X06879">
    <property type="status" value="NOT_ANNOTATED_CDS"/>
    <property type="molecule type" value="Genomic_DNA"/>
</dbReference>
<dbReference type="PDB" id="2EZP">
    <property type="method" value="NMR"/>
    <property type="chains" value="A/B/C=554-676"/>
</dbReference>
<dbReference type="PDB" id="6VRY">
    <property type="method" value="X-ray"/>
    <property type="resolution" value="1.40 A"/>
    <property type="chains" value="G=171-185"/>
</dbReference>
<dbReference type="PDBsum" id="2EZP"/>
<dbReference type="PDBsum" id="6VRY"/>
<dbReference type="SMR" id="P08810"/>
<dbReference type="GlyCosmos" id="P08810">
    <property type="glycosylation" value="23 sites, No reported glycans"/>
</dbReference>
<dbReference type="EvolutionaryTrace" id="P08810"/>
<dbReference type="Proteomes" id="UP000258290">
    <property type="component" value="Segment"/>
</dbReference>
<dbReference type="GO" id="GO:0044175">
    <property type="term" value="C:host cell endosome membrane"/>
    <property type="evidence" value="ECO:0007669"/>
    <property type="project" value="UniProtKB-SubCell"/>
</dbReference>
<dbReference type="GO" id="GO:0020002">
    <property type="term" value="C:host cell plasma membrane"/>
    <property type="evidence" value="ECO:0007669"/>
    <property type="project" value="UniProtKB-SubCell"/>
</dbReference>
<dbReference type="GO" id="GO:0016020">
    <property type="term" value="C:membrane"/>
    <property type="evidence" value="ECO:0007669"/>
    <property type="project" value="UniProtKB-KW"/>
</dbReference>
<dbReference type="GO" id="GO:0019031">
    <property type="term" value="C:viral envelope"/>
    <property type="evidence" value="ECO:0007669"/>
    <property type="project" value="UniProtKB-KW"/>
</dbReference>
<dbReference type="GO" id="GO:0055036">
    <property type="term" value="C:virion membrane"/>
    <property type="evidence" value="ECO:0007669"/>
    <property type="project" value="UniProtKB-SubCell"/>
</dbReference>
<dbReference type="GO" id="GO:0005198">
    <property type="term" value="F:structural molecule activity"/>
    <property type="evidence" value="ECO:0007669"/>
    <property type="project" value="InterPro"/>
</dbReference>
<dbReference type="GO" id="GO:0039663">
    <property type="term" value="P:membrane fusion involved in viral entry into host cell"/>
    <property type="evidence" value="ECO:0007669"/>
    <property type="project" value="UniProtKB-KW"/>
</dbReference>
<dbReference type="GO" id="GO:0046718">
    <property type="term" value="P:symbiont entry into host cell"/>
    <property type="evidence" value="ECO:0007669"/>
    <property type="project" value="UniProtKB-KW"/>
</dbReference>
<dbReference type="GO" id="GO:0019062">
    <property type="term" value="P:virion attachment to host cell"/>
    <property type="evidence" value="ECO:0007669"/>
    <property type="project" value="UniProtKB-KW"/>
</dbReference>
<dbReference type="CDD" id="cd09909">
    <property type="entry name" value="HIV-1-like_HR1-HR2"/>
    <property type="match status" value="1"/>
</dbReference>
<dbReference type="Gene3D" id="1.10.287.210">
    <property type="match status" value="1"/>
</dbReference>
<dbReference type="Gene3D" id="2.170.40.20">
    <property type="entry name" value="Human immunodeficiency virus 1, Gp160, envelope glycoprotein"/>
    <property type="match status" value="2"/>
</dbReference>
<dbReference type="InterPro" id="IPR036377">
    <property type="entry name" value="Gp120_core_sf"/>
</dbReference>
<dbReference type="InterPro" id="IPR000328">
    <property type="entry name" value="GP41-like"/>
</dbReference>
<dbReference type="InterPro" id="IPR000777">
    <property type="entry name" value="HIV1_Gp120"/>
</dbReference>
<dbReference type="Pfam" id="PF00516">
    <property type="entry name" value="GP120"/>
    <property type="match status" value="1"/>
</dbReference>
<dbReference type="Pfam" id="PF00517">
    <property type="entry name" value="GP41"/>
    <property type="match status" value="1"/>
</dbReference>
<dbReference type="SUPFAM" id="SSF56502">
    <property type="entry name" value="gp120 core"/>
    <property type="match status" value="1"/>
</dbReference>
<dbReference type="SUPFAM" id="SSF58069">
    <property type="entry name" value="Virus ectodomain"/>
    <property type="match status" value="1"/>
</dbReference>
<accession>P08810</accession>
<comment type="function">
    <text evidence="1">The surface protein gp120 (SU) attaches the virus to the host lymphoid cell by binding to the primary receptor CD4. This interaction induces a structural rearrangement creating a high affinity binding site for a chemokine coreceptor like CCR5. This peculiar 2 stage receptor-interaction strategy allows gp120 to maintain the highly conserved coreceptor-binding site in a cryptic conformation, protected from neutralizing antibodies. These changes are transmitted to the transmembrane protein gp41 and are thought to activate its fusogenic potential by unmasking its fusion peptide (By similarity).</text>
</comment>
<comment type="function">
    <text evidence="1">Surface protein gp120 (SU) may target the virus to gut-associated lymphoid tissue (GALT) by binding host ITGA4/ITGB7 (alpha-4/beta-7 integrins), a complex that mediates T-cell migration to the GALT. Interaction between gp120 and ITGA4/ITGB7 would allow the virus to enter GALT early in the infection, infecting and killing most of GALT's resting CD4+ T-cells. This T-cell depletion is believed to be the major insult to the host immune system leading to AIDS (By similarity).</text>
</comment>
<comment type="function">
    <text evidence="1">The surface protein gp120 is a ligand for CD209/DC-SIGN and CLEC4M/DC-SIGNR, which are respectively found on dendritic cells (DCs), and on endothelial cells of liver sinusoids and lymph node sinuses. These interactions allow capture of viral particles at mucosal surfaces by these cells and subsequent transmission to permissive cells. DCs are professional antigen presenting cells, critical for host immunity by inducing specific immune responses against a broad variety of pathogens. They act as sentinels in various tissues where they take up antigen, process it, and present it to T-cells following migration to lymphoid organs. SIV subverts the migration properties of dendritic cells to gain access to CD4+ T-cells in lymph nodes. Virus transmission to permissive T-cells occurs either in trans (without DCs infection, through viral capture and transmission), or in cis (following DCs productive infection, through the usual CD4-gp120 interaction), thereby inducing a robust infection. In trans infection, bound virions remain infectious over days and it is proposed that they are not degraded, but protected in non-lysosomal acidic organelles within the DCs close to the cell membrane thus contributing to the viral infectious potential during DCs' migration from the periphery to the lymphoid tissues. On arrival at lymphoid tissues, intact virions recycle back to DCs' cell surface allowing virus transmission to CD4+ T-cells. Virion capture also seems to lead to MHC-II-restricted viral antigen presentation, and probably to the activation of SIV-specific CD4+ cells (By similarity).</text>
</comment>
<comment type="function">
    <text evidence="1">The transmembrane protein gp41 (TM) acts as a class I viral fusion protein. Under the current model, the protein has at least 3 conformational states: pre-fusion native state, pre-hairpin intermediate state, and post-fusion hairpin state. During fusion of viral and target intracellular membranes, the coiled coil regions (heptad repeats) assume a trimer-of-hairpins structure, positioning the fusion peptide in close proximity to the C-terminal region of the ectodomain. The formation of this structure appears to drive apposition and subsequent fusion of viral and target cell membranes. Complete fusion occurs in host cell endosomes. The virus undergoes clathrin-dependent internalization long before endosomal fusion, thus minimizing the surface exposure of conserved viral epitopes during fusion and reducing the efficacy of inhibitors targeting these epitopes. Membranes fusion leads to delivery of the nucleocapsid into the cytoplasm (By similarity).</text>
</comment>
<comment type="function">
    <text evidence="1">The envelope glycoprotein gp160 precursor down-modulates cell surface CD4 antigen by interacting with it in the endoplasmic reticulum and blocking its transport to the cell surface.</text>
</comment>
<comment type="function">
    <text evidence="1">The gp120-gp41 heterodimer allows rapid transcytosis of the virus through CD4 negative cells such as simple epithelial monolayers of the intestinal, rectal and endocervical epithelial barriers. Both gp120 and gp41 specifically recognize glycosphingolipids galactosyl-ceramide (GalCer) or 3' sulfo-galactosyl-ceramide (GalS) present in the lipid rafts structures of epithelial cells. Binding to these alternative receptors allows the rapid transcytosis of the virus through the epithelial cells. This transcytotic vesicle-mediated transport of virions from the apical side to the basolateral side of the epithelial cells does not involve infection of the cells themselves (By similarity).</text>
</comment>
<comment type="subunit">
    <molecule>Surface protein gp120</molecule>
    <text evidence="1">The mature envelope protein (Env) consists of a homotrimer of non-covalently associated gp120-gp41 heterodimers. The resulting complex protrudes from the virus surface as a spike. Interacts with host CD4 and CCR5 (By similarity). Gp120 also interacts with the C-type lectins CD209/DC-SIGN and CLEC4M/DC-SIGNR (collectively referred to as DC-SIGN(R)).</text>
</comment>
<comment type="subunit">
    <molecule>Transmembrane protein gp41</molecule>
    <text evidence="1">The mature envelope protein (Env) consists of a homotrimer of non-covalently associated gp120-gp41 heterodimers. The resulting complex protrudes from the virus surface as a spike.</text>
</comment>
<comment type="subcellular location">
    <molecule>Transmembrane protein gp41</molecule>
    <subcellularLocation>
        <location evidence="1">Virion membrane</location>
        <topology evidence="1">Single-pass type I membrane protein</topology>
    </subcellularLocation>
    <subcellularLocation>
        <location evidence="1">Host cell membrane</location>
        <topology evidence="1">Single-pass type I membrane protein</topology>
    </subcellularLocation>
    <subcellularLocation>
        <location evidence="5">Host endosome membrane</location>
        <topology evidence="5">Single-pass type I membrane protein</topology>
    </subcellularLocation>
    <text evidence="1">It is probably concentrated at the site of budding and incorporated into the virions possibly by contacts between the cytoplasmic tail of Env and the N-terminus of Gag.</text>
</comment>
<comment type="subcellular location">
    <molecule>Surface protein gp120</molecule>
    <subcellularLocation>
        <location evidence="1">Virion membrane</location>
        <topology evidence="1">Peripheral membrane protein</topology>
    </subcellularLocation>
    <subcellularLocation>
        <location evidence="1">Host cell membrane</location>
        <topology evidence="1">Peripheral membrane protein</topology>
    </subcellularLocation>
    <subcellularLocation>
        <location evidence="5">Host endosome membrane</location>
        <topology evidence="5">Peripheral membrane protein</topology>
    </subcellularLocation>
    <text evidence="1">The surface protein is not anchored to the viral envelope, but associates with the extravirion surface through its binding to TM. It is probably concentrated at the site of budding and incorporated into the virions possibly by contacts between the cytoplasmic tail of Env and the N-terminus of Gag (By similarity).</text>
</comment>
<comment type="domain">
    <text evidence="1">Some of the most genetically diverse regions of the viral genome are present in Env. They are called variable regions 1 through 5 (V1 through V5) (By similarity).</text>
</comment>
<comment type="domain">
    <text evidence="1">The 17 amino acids long immunosuppressive region is present in many retroviral envelope proteins. Synthetic peptides derived from this relatively conserved sequence inhibit immune function in vitro and in vivo (By similarity).</text>
</comment>
<comment type="PTM">
    <text evidence="1">Specific enzymatic cleavages in vivo yield mature proteins. Envelope glycoproteins are synthesized as an inactive precursor that is heavily N-glycosylated and processed likely by host cell furin in the Golgi to yield the mature SU and TM proteins. The cleavage site between SU and TM requires the minimal sequence [KR]-X-[KR]-R (By similarity).</text>
</comment>
<comment type="PTM">
    <text evidence="1">Palmitoylation of the transmembrane protein and of Env polyprotein (prior to its proteolytic cleavage) is essential for their association with host cell membrane lipid rafts. Palmitoylation is therefore required for envelope trafficking to classical lipid rafts, but not for viral replication (By similarity).</text>
</comment>
<comment type="miscellaneous">
    <text>This is a macaque isolate.</text>
</comment>
<name>ENV_SIVM2</name>
<organismHost>
    <name type="scientific">Cercopithecidae</name>
    <name type="common">Old World monkeys</name>
    <dbReference type="NCBI Taxonomy" id="9527"/>
</organismHost>
<protein>
    <recommendedName>
        <fullName>Envelope glycoprotein gp160</fullName>
    </recommendedName>
    <alternativeName>
        <fullName>Env polyprotein</fullName>
    </alternativeName>
    <component>
        <recommendedName>
            <fullName>Surface protein gp120</fullName>
            <shortName>SU</shortName>
        </recommendedName>
        <alternativeName>
            <fullName>Glycoprotein 120</fullName>
            <shortName>gp120</shortName>
        </alternativeName>
    </component>
    <component>
        <recommendedName>
            <fullName>Transmembrane protein gp41</fullName>
            <shortName>TM</shortName>
        </recommendedName>
        <alternativeName>
            <fullName>Glycoprotein 32</fullName>
            <shortName>gp32</shortName>
        </alternativeName>
    </component>
</protein>
<feature type="signal peptide" evidence="2">
    <location>
        <begin position="1"/>
        <end position="19"/>
    </location>
</feature>
<feature type="chain" id="PRO_0000239512" description="Envelope glycoprotein gp160">
    <location>
        <begin position="20"/>
        <end position="881"/>
    </location>
</feature>
<feature type="chain" id="PRO_0000038466" description="Surface protein gp120" evidence="1">
    <location>
        <begin position="20"/>
        <end position="527"/>
    </location>
</feature>
<feature type="chain" id="PRO_0000038467" description="Transmembrane protein gp41" evidence="1">
    <location>
        <begin position="528"/>
        <end position="881"/>
    </location>
</feature>
<feature type="topological domain" description="Extracellular" evidence="2">
    <location>
        <begin position="20"/>
        <end position="696"/>
    </location>
</feature>
<feature type="transmembrane region" description="Helical" evidence="2">
    <location>
        <begin position="697"/>
        <end position="717"/>
    </location>
</feature>
<feature type="topological domain" description="Cytoplasmic" evidence="2">
    <location>
        <begin position="718"/>
        <end position="881"/>
    </location>
</feature>
<feature type="region of interest" description="V1">
    <location>
        <begin position="113"/>
        <end position="169"/>
    </location>
</feature>
<feature type="region of interest" description="V2">
    <location>
        <begin position="170"/>
        <end position="213"/>
    </location>
</feature>
<feature type="region of interest" description="V3">
    <location>
        <begin position="313"/>
        <end position="345"/>
    </location>
</feature>
<feature type="region of interest" description="V4">
    <location>
        <begin position="404"/>
        <end position="434"/>
    </location>
</feature>
<feature type="region of interest" description="V5">
    <location>
        <begin position="477"/>
        <end position="484"/>
    </location>
</feature>
<feature type="region of interest" description="Fusion peptide" evidence="2">
    <location>
        <begin position="528"/>
        <end position="548"/>
    </location>
</feature>
<feature type="region of interest" description="Immunosuppression" evidence="1">
    <location>
        <begin position="591"/>
        <end position="607"/>
    </location>
</feature>
<feature type="region of interest" description="MPER; binding to GalCer" evidence="1">
    <location>
        <begin position="673"/>
        <end position="694"/>
    </location>
</feature>
<feature type="region of interest" description="Disordered" evidence="3">
    <location>
        <begin position="737"/>
        <end position="761"/>
    </location>
</feature>
<feature type="coiled-coil region" evidence="2">
    <location>
        <begin position="636"/>
        <end position="668"/>
    </location>
</feature>
<feature type="short sequence motif" description="YXXV motif; contains endocytosis signal">
    <location>
        <begin position="723"/>
        <end position="726"/>
    </location>
</feature>
<feature type="short sequence motif" description="Di-leucine internalization motif" evidence="1">
    <location>
        <begin position="880"/>
        <end position="881"/>
    </location>
</feature>
<feature type="site" description="Cleavage; by host furin" evidence="2">
    <location>
        <begin position="527"/>
        <end position="528"/>
    </location>
</feature>
<feature type="site" description="In-frame UAG termination codon">
    <location>
        <position position="736"/>
    </location>
</feature>
<feature type="lipid moiety-binding region" description="S-palmitoyl cysteine; by host" evidence="1">
    <location>
        <position position="789"/>
    </location>
</feature>
<feature type="glycosylation site" description="N-linked (GlcNAc...) asparagine; by host" evidence="2">
    <location>
        <position position="37"/>
    </location>
</feature>
<feature type="glycosylation site" description="N-linked (GlcNAc...) asparagine; by host" evidence="2">
    <location>
        <position position="70"/>
    </location>
</feature>
<feature type="glycosylation site" description="N-linked (GlcNAc...) asparagine; by host" evidence="2">
    <location>
        <position position="114"/>
    </location>
</feature>
<feature type="glycosylation site" description="N-linked (GlcNAc...) asparagine; by host" evidence="2">
    <location>
        <position position="148"/>
    </location>
</feature>
<feature type="glycosylation site" description="N-linked (GlcNAc...) asparagine; by host" evidence="2">
    <location>
        <position position="158"/>
    </location>
</feature>
<feature type="glycosylation site" description="N-linked (GlcNAc...) asparagine; by host" evidence="2">
    <location>
        <position position="186"/>
    </location>
</feature>
<feature type="glycosylation site" description="N-linked (GlcNAc...) asparagine; by host" evidence="2">
    <location>
        <position position="200"/>
    </location>
</feature>
<feature type="glycosylation site" description="N-linked (GlcNAc...) asparagine; by host" evidence="2">
    <location>
        <position position="204"/>
    </location>
</feature>
<feature type="glycosylation site" description="N-linked (GlcNAc...) asparagine; by host" evidence="2">
    <location>
        <position position="214"/>
    </location>
</feature>
<feature type="glycosylation site" description="N-linked (GlcNAc...) asparagine; by host" evidence="2">
    <location>
        <position position="246"/>
    </location>
</feature>
<feature type="glycosylation site" description="N-linked (GlcNAc...) asparagine; by host" evidence="2">
    <location>
        <position position="249"/>
    </location>
</feature>
<feature type="glycosylation site" description="N-linked (GlcNAc...) asparagine; by host" evidence="2">
    <location>
        <position position="280"/>
    </location>
</feature>
<feature type="glycosylation site" description="N-linked (GlcNAc...) asparagine; by host" evidence="2">
    <location>
        <position position="286"/>
    </location>
</feature>
<feature type="glycosylation site" description="N-linked (GlcNAc...) asparagine; by host" evidence="2">
    <location>
        <position position="297"/>
    </location>
</feature>
<feature type="glycosylation site" description="N-linked (GlcNAc...) asparagine; by host" evidence="2">
    <location>
        <position position="308"/>
    </location>
</feature>
<feature type="glycosylation site" description="N-linked (GlcNAc...) asparagine; by host" evidence="2">
    <location>
        <position position="318"/>
    </location>
</feature>
<feature type="glycosylation site" description="N-linked (GlcNAc...) asparagine; by host" evidence="2">
    <location>
        <position position="373"/>
    </location>
</feature>
<feature type="glycosylation site" description="N-linked (GlcNAc...) asparagine; by host" evidence="2">
    <location>
        <position position="379"/>
    </location>
</feature>
<feature type="glycosylation site" description="N-linked (GlcNAc...) asparagine; by host" evidence="2">
    <location>
        <position position="462"/>
    </location>
</feature>
<feature type="glycosylation site" description="N-linked (GlcNAc...) asparagine; by host" evidence="2">
    <location>
        <position position="478"/>
    </location>
</feature>
<feature type="glycosylation site" description="N-linked (GlcNAc...) asparagine; by host" evidence="2">
    <location>
        <position position="627"/>
    </location>
</feature>
<feature type="glycosylation site" description="N-linked (GlcNAc...) asparagine; by host" evidence="2">
    <location>
        <position position="636"/>
    </location>
</feature>
<feature type="glycosylation site" description="N-linked (GlcNAc...) asparagine; by host" evidence="2">
    <location>
        <position position="652"/>
    </location>
</feature>
<feature type="disulfide bond" evidence="1">
    <location>
        <begin position="44"/>
        <end position="57"/>
    </location>
</feature>
<feature type="disulfide bond" evidence="1">
    <location>
        <begin position="101"/>
        <end position="222"/>
    </location>
</feature>
<feature type="disulfide bond" evidence="1">
    <location>
        <begin position="108"/>
        <end position="213"/>
    </location>
</feature>
<feature type="disulfide bond" evidence="1">
    <location>
        <begin position="113"/>
        <end position="170"/>
    </location>
</feature>
<feature type="disulfide bond" evidence="1">
    <location>
        <begin position="235"/>
        <end position="265"/>
    </location>
</feature>
<feature type="disulfide bond" evidence="1">
    <location>
        <begin position="245"/>
        <end position="257"/>
    </location>
</feature>
<feature type="disulfide bond" evidence="1">
    <location>
        <begin position="313"/>
        <end position="346"/>
    </location>
</feature>
<feature type="disulfide bond" evidence="1">
    <location>
        <begin position="397"/>
        <end position="461"/>
    </location>
</feature>
<feature type="disulfide bond" evidence="1">
    <location>
        <begin position="404"/>
        <end position="434"/>
    </location>
</feature>
<feature type="mutagenesis site" description="Reduced Env internalization. Mislocalization over the entire plasma membrane." evidence="4">
    <original>Y</original>
    <variation>C</variation>
    <location>
        <position position="723"/>
    </location>
</feature>
<feature type="sequence conflict" description="In Ref. 2." evidence="5" ref="2">
    <original>S</original>
    <variation>N</variation>
    <location>
        <position position="481"/>
    </location>
</feature>
<feature type="helix" evidence="6">
    <location>
        <begin position="557"/>
        <end position="607"/>
    </location>
</feature>
<feature type="strand" evidence="6">
    <location>
        <begin position="615"/>
        <end position="618"/>
    </location>
</feature>
<feature type="helix" evidence="6">
    <location>
        <begin position="634"/>
        <end position="674"/>
    </location>
</feature>
<proteinExistence type="evidence at protein level"/>
<keyword id="KW-0002">3D-structure</keyword>
<keyword id="KW-0053">Apoptosis</keyword>
<keyword id="KW-0165">Cleavage on pair of basic residues</keyword>
<keyword id="KW-0175">Coiled coil</keyword>
<keyword id="KW-1015">Disulfide bond</keyword>
<keyword id="KW-1168">Fusion of virus membrane with host membrane</keyword>
<keyword id="KW-0325">Glycoprotein</keyword>
<keyword id="KW-1032">Host cell membrane</keyword>
<keyword id="KW-1039">Host endosome</keyword>
<keyword id="KW-1043">Host membrane</keyword>
<keyword id="KW-0945">Host-virus interaction</keyword>
<keyword id="KW-0449">Lipoprotein</keyword>
<keyword id="KW-0472">Membrane</keyword>
<keyword id="KW-0564">Palmitate</keyword>
<keyword id="KW-0732">Signal</keyword>
<keyword id="KW-0812">Transmembrane</keyword>
<keyword id="KW-1133">Transmembrane helix</keyword>
<keyword id="KW-1161">Viral attachment to host cell</keyword>
<keyword id="KW-0261">Viral envelope protein</keyword>
<keyword id="KW-1162">Viral penetration into host cytoplasm</keyword>
<keyword id="KW-0946">Virion</keyword>
<keyword id="KW-1160">Virus entry into host cell</keyword>
<gene>
    <name type="primary">env</name>
</gene>
<sequence length="881" mass="101252">MGCLGNQLLIAILLLSVYGIYCTQYVTVFYGVPAWRNATIPLFCATKNRDTWGTTQCLPDNGDYSELALNVTESFDAWENTVTEQAIEDVWQLFETSIKPCVKLSPLCITMRCNKSETDRWGLTKSSTTITTAAPTSAPVSEKIDMVNETSSCIAQNNCTGLEQEQMISCKFTMTGLKRDKTKEYNETWYSTDLVCEQGNSTDNESRCYMNHCNTSVIQESCDKHYWDTIRFRYCAPPGYALLRCNDTNYSGFMPKCSKVVVSSCTRMMETQTSTWFGFNGTRAENRTYIYWHGRDNRTIISLNKYYNLTMKCRRPGNKTVLPVTIMSGLVFHSQPINDRPKQAWCWFGGKWKDAIKEVKQTIVKHPRYTGTNNTDKINLTAPGGGDPEVTFMWTNCRGEFLYCKMNWFLNWVEDRDVTTQRPKERHRRNYVPCHIRQIINTWHKVGKNVYLPPREGDLTCNSTVTSLIANIDWTDGNQTSITMSAEVAELYRLELGDYKLVEITPIGLAPTDVKRYTTGGTSRNKRGVFVLGFLGFLATAGSAMGAASLTLTAQSRTLLAGIVQQQQQLLDVVKRQQELLRLTVWGTKNLQTRVTAIEKYLKDQAQLNAWGCAFRQVCHTTVPWPNASLTPDWNNDTWQEWERKVDFLEENITALLEEAQIQQEKNMYELQKLNSWDVFGNWFDLASWIKYIQYGIYVVVGVILLRIVIYIVQMLAKLRQGYRPVFSSPPSYFQXTHTQQDPALPTREGKEGDGGEGGGNSSWPWQIEYIHFLIRQLIRLLTWLFSNCRTLLSRAYQILQPILQRLSATLRRVREVLRTELTYLQYGWSYFHEAVQAGWRSATETLAGAWRDLWETLRRGGRWILAIPRRIRQGLELTLL</sequence>
<evidence type="ECO:0000250" key="1"/>
<evidence type="ECO:0000255" key="2"/>
<evidence type="ECO:0000256" key="3">
    <source>
        <dbReference type="SAM" id="MobiDB-lite"/>
    </source>
</evidence>
<evidence type="ECO:0000269" key="4">
    <source>
    </source>
</evidence>
<evidence type="ECO:0000305" key="5"/>
<evidence type="ECO:0007829" key="6">
    <source>
        <dbReference type="PDB" id="2EZP"/>
    </source>
</evidence>
<organism>
    <name type="scientific">Simian immunodeficiency virus (isolate Mm251)</name>
    <name type="common">SIV-mac</name>
    <name type="synonym">Simian immunodeficiency virus rhesus monkey</name>
    <dbReference type="NCBI Taxonomy" id="11734"/>
    <lineage>
        <taxon>Viruses</taxon>
        <taxon>Riboviria</taxon>
        <taxon>Pararnavirae</taxon>
        <taxon>Artverviricota</taxon>
        <taxon>Revtraviricetes</taxon>
        <taxon>Ortervirales</taxon>
        <taxon>Retroviridae</taxon>
        <taxon>Orthoretrovirinae</taxon>
        <taxon>Lentivirus</taxon>
        <taxon>Simian immunodeficiency virus</taxon>
    </lineage>
</organism>